<keyword id="KW-0687">Ribonucleoprotein</keyword>
<keyword id="KW-0689">Ribosomal protein</keyword>
<protein>
    <recommendedName>
        <fullName evidence="1">Large ribosomal subunit protein bL28</fullName>
    </recommendedName>
    <alternativeName>
        <fullName evidence="2">50S ribosomal protein L28</fullName>
    </alternativeName>
</protein>
<dbReference type="EMBL" id="AP009240">
    <property type="protein sequence ID" value="BAG79441.1"/>
    <property type="molecule type" value="Genomic_DNA"/>
</dbReference>
<dbReference type="RefSeq" id="WP_000091955.1">
    <property type="nucleotide sequence ID" value="NC_011415.1"/>
</dbReference>
<dbReference type="SMR" id="B6I3L4"/>
<dbReference type="GeneID" id="93778350"/>
<dbReference type="KEGG" id="ecy:ECSE_3917"/>
<dbReference type="HOGENOM" id="CLU_064548_3_1_6"/>
<dbReference type="Proteomes" id="UP000008199">
    <property type="component" value="Chromosome"/>
</dbReference>
<dbReference type="GO" id="GO:0022625">
    <property type="term" value="C:cytosolic large ribosomal subunit"/>
    <property type="evidence" value="ECO:0007669"/>
    <property type="project" value="TreeGrafter"/>
</dbReference>
<dbReference type="GO" id="GO:0003735">
    <property type="term" value="F:structural constituent of ribosome"/>
    <property type="evidence" value="ECO:0007669"/>
    <property type="project" value="InterPro"/>
</dbReference>
<dbReference type="GO" id="GO:0006412">
    <property type="term" value="P:translation"/>
    <property type="evidence" value="ECO:0007669"/>
    <property type="project" value="UniProtKB-UniRule"/>
</dbReference>
<dbReference type="FunFam" id="2.30.170.40:FF:000001">
    <property type="entry name" value="50S ribosomal protein L28"/>
    <property type="match status" value="1"/>
</dbReference>
<dbReference type="Gene3D" id="2.30.170.40">
    <property type="entry name" value="Ribosomal protein L28/L24"/>
    <property type="match status" value="1"/>
</dbReference>
<dbReference type="HAMAP" id="MF_00373">
    <property type="entry name" value="Ribosomal_bL28"/>
    <property type="match status" value="1"/>
</dbReference>
<dbReference type="InterPro" id="IPR026569">
    <property type="entry name" value="Ribosomal_bL28"/>
</dbReference>
<dbReference type="InterPro" id="IPR034704">
    <property type="entry name" value="Ribosomal_bL28/bL31-like_sf"/>
</dbReference>
<dbReference type="InterPro" id="IPR001383">
    <property type="entry name" value="Ribosomal_bL28_bact-type"/>
</dbReference>
<dbReference type="InterPro" id="IPR037147">
    <property type="entry name" value="Ribosomal_bL28_sf"/>
</dbReference>
<dbReference type="NCBIfam" id="TIGR00009">
    <property type="entry name" value="L28"/>
    <property type="match status" value="1"/>
</dbReference>
<dbReference type="PANTHER" id="PTHR13528">
    <property type="entry name" value="39S RIBOSOMAL PROTEIN L28, MITOCHONDRIAL"/>
    <property type="match status" value="1"/>
</dbReference>
<dbReference type="PANTHER" id="PTHR13528:SF2">
    <property type="entry name" value="LARGE RIBOSOMAL SUBUNIT PROTEIN BL28M"/>
    <property type="match status" value="1"/>
</dbReference>
<dbReference type="Pfam" id="PF00830">
    <property type="entry name" value="Ribosomal_L28"/>
    <property type="match status" value="1"/>
</dbReference>
<dbReference type="SUPFAM" id="SSF143800">
    <property type="entry name" value="L28p-like"/>
    <property type="match status" value="1"/>
</dbReference>
<feature type="chain" id="PRO_1000121631" description="Large ribosomal subunit protein bL28">
    <location>
        <begin position="1"/>
        <end position="78"/>
    </location>
</feature>
<comment type="similarity">
    <text evidence="1">Belongs to the bacterial ribosomal protein bL28 family.</text>
</comment>
<proteinExistence type="inferred from homology"/>
<reference key="1">
    <citation type="journal article" date="2008" name="DNA Res.">
        <title>Complete genome sequence and comparative analysis of the wild-type commensal Escherichia coli strain SE11 isolated from a healthy adult.</title>
        <authorList>
            <person name="Oshima K."/>
            <person name="Toh H."/>
            <person name="Ogura Y."/>
            <person name="Sasamoto H."/>
            <person name="Morita H."/>
            <person name="Park S.-H."/>
            <person name="Ooka T."/>
            <person name="Iyoda S."/>
            <person name="Taylor T.D."/>
            <person name="Hayashi T."/>
            <person name="Itoh K."/>
            <person name="Hattori M."/>
        </authorList>
    </citation>
    <scope>NUCLEOTIDE SEQUENCE [LARGE SCALE GENOMIC DNA]</scope>
    <source>
        <strain>SE11</strain>
    </source>
</reference>
<sequence>MSRVCQVTGKRPVTGNNRSHALNATKRRFLPNLHSHRFWVESEKRFVTLRVSAKGMRVIDKKGIDTVLAELRARGEKY</sequence>
<evidence type="ECO:0000255" key="1">
    <source>
        <dbReference type="HAMAP-Rule" id="MF_00373"/>
    </source>
</evidence>
<evidence type="ECO:0000305" key="2"/>
<organism>
    <name type="scientific">Escherichia coli (strain SE11)</name>
    <dbReference type="NCBI Taxonomy" id="409438"/>
    <lineage>
        <taxon>Bacteria</taxon>
        <taxon>Pseudomonadati</taxon>
        <taxon>Pseudomonadota</taxon>
        <taxon>Gammaproteobacteria</taxon>
        <taxon>Enterobacterales</taxon>
        <taxon>Enterobacteriaceae</taxon>
        <taxon>Escherichia</taxon>
    </lineage>
</organism>
<gene>
    <name evidence="1" type="primary">rpmB</name>
    <name type="ordered locus">ECSE_3917</name>
</gene>
<name>RL28_ECOSE</name>
<accession>B6I3L4</accession>